<proteinExistence type="inferred from homology"/>
<evidence type="ECO:0000255" key="1">
    <source>
        <dbReference type="HAMAP-Rule" id="MF_00436"/>
    </source>
</evidence>
<evidence type="ECO:0000255" key="2">
    <source>
        <dbReference type="PROSITE-ProRule" id="PRU01346"/>
    </source>
</evidence>
<evidence type="ECO:0000256" key="3">
    <source>
        <dbReference type="SAM" id="MobiDB-lite"/>
    </source>
</evidence>
<comment type="function">
    <text evidence="1">RNA chaperone that binds small regulatory RNA (sRNAs) and mRNAs to facilitate mRNA translational regulation in response to envelope stress, environmental stress and changes in metabolite concentrations. Also binds with high specificity to tRNAs.</text>
</comment>
<comment type="subunit">
    <text evidence="1">Homohexamer.</text>
</comment>
<comment type="similarity">
    <text evidence="1">Belongs to the Hfq family.</text>
</comment>
<dbReference type="EMBL" id="FM178379">
    <property type="protein sequence ID" value="CAQ80461.1"/>
    <property type="molecule type" value="Genomic_DNA"/>
</dbReference>
<dbReference type="RefSeq" id="WP_012551213.1">
    <property type="nucleotide sequence ID" value="NC_011312.1"/>
</dbReference>
<dbReference type="SMR" id="B6EMQ7"/>
<dbReference type="KEGG" id="vsa:VSAL_I2777"/>
<dbReference type="eggNOG" id="COG1923">
    <property type="taxonomic scope" value="Bacteria"/>
</dbReference>
<dbReference type="HOGENOM" id="CLU_113688_2_2_6"/>
<dbReference type="Proteomes" id="UP000001730">
    <property type="component" value="Chromosome 1"/>
</dbReference>
<dbReference type="GO" id="GO:0005829">
    <property type="term" value="C:cytosol"/>
    <property type="evidence" value="ECO:0007669"/>
    <property type="project" value="TreeGrafter"/>
</dbReference>
<dbReference type="GO" id="GO:0003723">
    <property type="term" value="F:RNA binding"/>
    <property type="evidence" value="ECO:0007669"/>
    <property type="project" value="UniProtKB-UniRule"/>
</dbReference>
<dbReference type="GO" id="GO:0006355">
    <property type="term" value="P:regulation of DNA-templated transcription"/>
    <property type="evidence" value="ECO:0007669"/>
    <property type="project" value="InterPro"/>
</dbReference>
<dbReference type="GO" id="GO:0043487">
    <property type="term" value="P:regulation of RNA stability"/>
    <property type="evidence" value="ECO:0007669"/>
    <property type="project" value="TreeGrafter"/>
</dbReference>
<dbReference type="GO" id="GO:0045974">
    <property type="term" value="P:regulation of translation, ncRNA-mediated"/>
    <property type="evidence" value="ECO:0007669"/>
    <property type="project" value="TreeGrafter"/>
</dbReference>
<dbReference type="CDD" id="cd01716">
    <property type="entry name" value="Hfq"/>
    <property type="match status" value="1"/>
</dbReference>
<dbReference type="FunFam" id="2.30.30.100:FF:000001">
    <property type="entry name" value="RNA-binding protein Hfq"/>
    <property type="match status" value="1"/>
</dbReference>
<dbReference type="Gene3D" id="2.30.30.100">
    <property type="match status" value="1"/>
</dbReference>
<dbReference type="HAMAP" id="MF_00436">
    <property type="entry name" value="Hfq"/>
    <property type="match status" value="1"/>
</dbReference>
<dbReference type="InterPro" id="IPR005001">
    <property type="entry name" value="Hfq"/>
</dbReference>
<dbReference type="InterPro" id="IPR010920">
    <property type="entry name" value="LSM_dom_sf"/>
</dbReference>
<dbReference type="InterPro" id="IPR047575">
    <property type="entry name" value="Sm"/>
</dbReference>
<dbReference type="NCBIfam" id="TIGR02383">
    <property type="entry name" value="Hfq"/>
    <property type="match status" value="1"/>
</dbReference>
<dbReference type="NCBIfam" id="NF001602">
    <property type="entry name" value="PRK00395.1"/>
    <property type="match status" value="1"/>
</dbReference>
<dbReference type="PANTHER" id="PTHR34772">
    <property type="entry name" value="RNA-BINDING PROTEIN HFQ"/>
    <property type="match status" value="1"/>
</dbReference>
<dbReference type="PANTHER" id="PTHR34772:SF1">
    <property type="entry name" value="RNA-BINDING PROTEIN HFQ"/>
    <property type="match status" value="1"/>
</dbReference>
<dbReference type="Pfam" id="PF17209">
    <property type="entry name" value="Hfq"/>
    <property type="match status" value="1"/>
</dbReference>
<dbReference type="SUPFAM" id="SSF50182">
    <property type="entry name" value="Sm-like ribonucleoproteins"/>
    <property type="match status" value="1"/>
</dbReference>
<dbReference type="PROSITE" id="PS52002">
    <property type="entry name" value="SM"/>
    <property type="match status" value="1"/>
</dbReference>
<protein>
    <recommendedName>
        <fullName evidence="1">RNA-binding protein Hfq</fullName>
    </recommendedName>
</protein>
<gene>
    <name evidence="1" type="primary">hfq</name>
    <name type="ordered locus">VSAL_I2777</name>
</gene>
<feature type="chain" id="PRO_1000190299" description="RNA-binding protein Hfq">
    <location>
        <begin position="1"/>
        <end position="88"/>
    </location>
</feature>
<feature type="domain" description="Sm" evidence="2">
    <location>
        <begin position="9"/>
        <end position="68"/>
    </location>
</feature>
<feature type="region of interest" description="Disordered" evidence="3">
    <location>
        <begin position="66"/>
        <end position="88"/>
    </location>
</feature>
<feature type="compositionally biased region" description="Basic and acidic residues" evidence="3">
    <location>
        <begin position="72"/>
        <end position="88"/>
    </location>
</feature>
<reference key="1">
    <citation type="journal article" date="2008" name="BMC Genomics">
        <title>The genome sequence of the fish pathogen Aliivibrio salmonicida strain LFI1238 shows extensive evidence of gene decay.</title>
        <authorList>
            <person name="Hjerde E."/>
            <person name="Lorentzen M.S."/>
            <person name="Holden M.T."/>
            <person name="Seeger K."/>
            <person name="Paulsen S."/>
            <person name="Bason N."/>
            <person name="Churcher C."/>
            <person name="Harris D."/>
            <person name="Norbertczak H."/>
            <person name="Quail M.A."/>
            <person name="Sanders S."/>
            <person name="Thurston S."/>
            <person name="Parkhill J."/>
            <person name="Willassen N.P."/>
            <person name="Thomson N.R."/>
        </authorList>
    </citation>
    <scope>NUCLEOTIDE SEQUENCE [LARGE SCALE GENOMIC DNA]</scope>
    <source>
        <strain>LFI1238</strain>
    </source>
</reference>
<sequence>MAKGQSLQDPFLNALRCERIPVSIYLVNGIKLQGQIESFDQFVILLKNTVNQMVYKHAISTVVPARAVSHHTASDRPQGERPQETTEE</sequence>
<keyword id="KW-0694">RNA-binding</keyword>
<keyword id="KW-0346">Stress response</keyword>
<accession>B6EMQ7</accession>
<name>HFQ_ALISL</name>
<organism>
    <name type="scientific">Aliivibrio salmonicida (strain LFI1238)</name>
    <name type="common">Vibrio salmonicida (strain LFI1238)</name>
    <dbReference type="NCBI Taxonomy" id="316275"/>
    <lineage>
        <taxon>Bacteria</taxon>
        <taxon>Pseudomonadati</taxon>
        <taxon>Pseudomonadota</taxon>
        <taxon>Gammaproteobacteria</taxon>
        <taxon>Vibrionales</taxon>
        <taxon>Vibrionaceae</taxon>
        <taxon>Aliivibrio</taxon>
    </lineage>
</organism>